<organism>
    <name type="scientific">Burkholderia mallei (strain NCTC 10229)</name>
    <dbReference type="NCBI Taxonomy" id="412022"/>
    <lineage>
        <taxon>Bacteria</taxon>
        <taxon>Pseudomonadati</taxon>
        <taxon>Pseudomonadota</taxon>
        <taxon>Betaproteobacteria</taxon>
        <taxon>Burkholderiales</taxon>
        <taxon>Burkholderiaceae</taxon>
        <taxon>Burkholderia</taxon>
        <taxon>pseudomallei group</taxon>
    </lineage>
</organism>
<accession>A2S0L3</accession>
<accession>A2S0L2</accession>
<dbReference type="EC" id="2.7.1.39" evidence="1"/>
<dbReference type="EMBL" id="CP000545">
    <property type="protein sequence ID" value="ABN00147.2"/>
    <property type="molecule type" value="Genomic_DNA"/>
</dbReference>
<dbReference type="RefSeq" id="WP_004190439.1">
    <property type="nucleotide sequence ID" value="NC_008835.1"/>
</dbReference>
<dbReference type="SMR" id="A2S0L3"/>
<dbReference type="KEGG" id="bml:BMA10229_1681"/>
<dbReference type="HOGENOM" id="CLU_053300_0_0_4"/>
<dbReference type="UniPathway" id="UPA00050">
    <property type="reaction ID" value="UER00064"/>
</dbReference>
<dbReference type="Proteomes" id="UP000002283">
    <property type="component" value="Chromosome II"/>
</dbReference>
<dbReference type="GO" id="GO:0005524">
    <property type="term" value="F:ATP binding"/>
    <property type="evidence" value="ECO:0007669"/>
    <property type="project" value="UniProtKB-KW"/>
</dbReference>
<dbReference type="GO" id="GO:0004413">
    <property type="term" value="F:homoserine kinase activity"/>
    <property type="evidence" value="ECO:0007669"/>
    <property type="project" value="UniProtKB-UniRule"/>
</dbReference>
<dbReference type="GO" id="GO:0009088">
    <property type="term" value="P:threonine biosynthetic process"/>
    <property type="evidence" value="ECO:0007669"/>
    <property type="project" value="UniProtKB-UniRule"/>
</dbReference>
<dbReference type="CDD" id="cd05153">
    <property type="entry name" value="HomoserineK_II"/>
    <property type="match status" value="1"/>
</dbReference>
<dbReference type="Gene3D" id="3.90.1200.10">
    <property type="match status" value="1"/>
</dbReference>
<dbReference type="Gene3D" id="3.30.200.20">
    <property type="entry name" value="Phosphorylase Kinase, domain 1"/>
    <property type="match status" value="1"/>
</dbReference>
<dbReference type="HAMAP" id="MF_00301">
    <property type="entry name" value="Homoser_kinase_2"/>
    <property type="match status" value="1"/>
</dbReference>
<dbReference type="InterPro" id="IPR002575">
    <property type="entry name" value="Aminoglycoside_PTrfase"/>
</dbReference>
<dbReference type="InterPro" id="IPR005280">
    <property type="entry name" value="Homoserine_kinase_II"/>
</dbReference>
<dbReference type="InterPro" id="IPR011009">
    <property type="entry name" value="Kinase-like_dom_sf"/>
</dbReference>
<dbReference type="InterPro" id="IPR050249">
    <property type="entry name" value="Pseudomonas-type_ThrB"/>
</dbReference>
<dbReference type="NCBIfam" id="NF003558">
    <property type="entry name" value="PRK05231.1"/>
    <property type="match status" value="1"/>
</dbReference>
<dbReference type="NCBIfam" id="TIGR00938">
    <property type="entry name" value="thrB_alt"/>
    <property type="match status" value="1"/>
</dbReference>
<dbReference type="PANTHER" id="PTHR21064:SF6">
    <property type="entry name" value="AMINOGLYCOSIDE PHOSPHOTRANSFERASE DOMAIN-CONTAINING PROTEIN"/>
    <property type="match status" value="1"/>
</dbReference>
<dbReference type="PANTHER" id="PTHR21064">
    <property type="entry name" value="AMINOGLYCOSIDE PHOSPHOTRANSFERASE DOMAIN-CONTAINING PROTEIN-RELATED"/>
    <property type="match status" value="1"/>
</dbReference>
<dbReference type="Pfam" id="PF01636">
    <property type="entry name" value="APH"/>
    <property type="match status" value="1"/>
</dbReference>
<dbReference type="SUPFAM" id="SSF56112">
    <property type="entry name" value="Protein kinase-like (PK-like)"/>
    <property type="match status" value="1"/>
</dbReference>
<keyword id="KW-0028">Amino-acid biosynthesis</keyword>
<keyword id="KW-0067">ATP-binding</keyword>
<keyword id="KW-0418">Kinase</keyword>
<keyword id="KW-0547">Nucleotide-binding</keyword>
<keyword id="KW-0791">Threonine biosynthesis</keyword>
<keyword id="KW-0808">Transferase</keyword>
<sequence>MAVFTAVSDADLALWMRHYDLGDVVAFRGIPSGIENSNFFLTTTRGEYVLTIFENLTAGQLPFYVDLMSHLAKHGVPVPAPVARDDGTLFGELHGKPAAIVTKLEGAAQLAPGVEHCVEVGQMLARMHLAGRDYPRHQPNLRSLPWWRDTVPAIAPFVTGEQRALLEGELAHQAAFFASDDYAALPEGPCHCDLFRDNALFAHAEPDTGHSVRLGGFFDFYFAGCDKWLFDVAVTVNDWCVDLPTGALDAARADALLRAYQTVRPFTAGERRRWGDMLRAGAYRFWVSRLYDFHLPRAAQMLKPHDPGHFERILRERIAHAGALPETHACN</sequence>
<gene>
    <name evidence="1" type="primary">thrB</name>
    <name type="ordered locus">BMA10229_1681</name>
</gene>
<evidence type="ECO:0000255" key="1">
    <source>
        <dbReference type="HAMAP-Rule" id="MF_00301"/>
    </source>
</evidence>
<feature type="chain" id="PRO_1000022578" description="Homoserine kinase">
    <location>
        <begin position="1"/>
        <end position="331"/>
    </location>
</feature>
<name>KHSE_BURM9</name>
<protein>
    <recommendedName>
        <fullName evidence="1">Homoserine kinase</fullName>
        <shortName evidence="1">HK</shortName>
        <shortName evidence="1">HSK</shortName>
        <ecNumber evidence="1">2.7.1.39</ecNumber>
    </recommendedName>
</protein>
<comment type="catalytic activity">
    <reaction evidence="1">
        <text>L-homoserine + ATP = O-phospho-L-homoserine + ADP + H(+)</text>
        <dbReference type="Rhea" id="RHEA:13985"/>
        <dbReference type="ChEBI" id="CHEBI:15378"/>
        <dbReference type="ChEBI" id="CHEBI:30616"/>
        <dbReference type="ChEBI" id="CHEBI:57476"/>
        <dbReference type="ChEBI" id="CHEBI:57590"/>
        <dbReference type="ChEBI" id="CHEBI:456216"/>
        <dbReference type="EC" id="2.7.1.39"/>
    </reaction>
</comment>
<comment type="pathway">
    <text evidence="1">Amino-acid biosynthesis; L-threonine biosynthesis; L-threonine from L-aspartate: step 4/5.</text>
</comment>
<comment type="similarity">
    <text evidence="1">Belongs to the pseudomonas-type ThrB family.</text>
</comment>
<proteinExistence type="inferred from homology"/>
<reference key="1">
    <citation type="journal article" date="2010" name="Genome Biol. Evol.">
        <title>Continuing evolution of Burkholderia mallei through genome reduction and large-scale rearrangements.</title>
        <authorList>
            <person name="Losada L."/>
            <person name="Ronning C.M."/>
            <person name="DeShazer D."/>
            <person name="Woods D."/>
            <person name="Fedorova N."/>
            <person name="Kim H.S."/>
            <person name="Shabalina S.A."/>
            <person name="Pearson T.R."/>
            <person name="Brinkac L."/>
            <person name="Tan P."/>
            <person name="Nandi T."/>
            <person name="Crabtree J."/>
            <person name="Badger J."/>
            <person name="Beckstrom-Sternberg S."/>
            <person name="Saqib M."/>
            <person name="Schutzer S.E."/>
            <person name="Keim P."/>
            <person name="Nierman W.C."/>
        </authorList>
    </citation>
    <scope>NUCLEOTIDE SEQUENCE [LARGE SCALE GENOMIC DNA]</scope>
    <source>
        <strain>NCTC 10229</strain>
    </source>
</reference>